<gene>
    <name evidence="1" type="primary">pyrB</name>
    <name type="ordered locus">CKO_03562</name>
</gene>
<name>PYRB_CITK8</name>
<feature type="chain" id="PRO_1000000005" description="Aspartate carbamoyltransferase catalytic subunit">
    <location>
        <begin position="1"/>
        <end position="311"/>
    </location>
</feature>
<feature type="binding site" evidence="1">
    <location>
        <position position="55"/>
    </location>
    <ligand>
        <name>carbamoyl phosphate</name>
        <dbReference type="ChEBI" id="CHEBI:58228"/>
    </ligand>
</feature>
<feature type="binding site" evidence="1">
    <location>
        <position position="56"/>
    </location>
    <ligand>
        <name>carbamoyl phosphate</name>
        <dbReference type="ChEBI" id="CHEBI:58228"/>
    </ligand>
</feature>
<feature type="binding site" evidence="1">
    <location>
        <position position="85"/>
    </location>
    <ligand>
        <name>L-aspartate</name>
        <dbReference type="ChEBI" id="CHEBI:29991"/>
    </ligand>
</feature>
<feature type="binding site" evidence="1">
    <location>
        <position position="106"/>
    </location>
    <ligand>
        <name>carbamoyl phosphate</name>
        <dbReference type="ChEBI" id="CHEBI:58228"/>
    </ligand>
</feature>
<feature type="binding site" evidence="1">
    <location>
        <position position="135"/>
    </location>
    <ligand>
        <name>carbamoyl phosphate</name>
        <dbReference type="ChEBI" id="CHEBI:58228"/>
    </ligand>
</feature>
<feature type="binding site" evidence="1">
    <location>
        <position position="138"/>
    </location>
    <ligand>
        <name>carbamoyl phosphate</name>
        <dbReference type="ChEBI" id="CHEBI:58228"/>
    </ligand>
</feature>
<feature type="binding site" evidence="1">
    <location>
        <position position="168"/>
    </location>
    <ligand>
        <name>L-aspartate</name>
        <dbReference type="ChEBI" id="CHEBI:29991"/>
    </ligand>
</feature>
<feature type="binding site" evidence="1">
    <location>
        <position position="230"/>
    </location>
    <ligand>
        <name>L-aspartate</name>
        <dbReference type="ChEBI" id="CHEBI:29991"/>
    </ligand>
</feature>
<feature type="binding site" evidence="1">
    <location>
        <position position="268"/>
    </location>
    <ligand>
        <name>carbamoyl phosphate</name>
        <dbReference type="ChEBI" id="CHEBI:58228"/>
    </ligand>
</feature>
<feature type="binding site" evidence="1">
    <location>
        <position position="269"/>
    </location>
    <ligand>
        <name>carbamoyl phosphate</name>
        <dbReference type="ChEBI" id="CHEBI:58228"/>
    </ligand>
</feature>
<dbReference type="EC" id="2.1.3.2" evidence="1"/>
<dbReference type="EMBL" id="CP000822">
    <property type="protein sequence ID" value="ABV14641.1"/>
    <property type="molecule type" value="Genomic_DNA"/>
</dbReference>
<dbReference type="RefSeq" id="WP_012134340.1">
    <property type="nucleotide sequence ID" value="NC_009792.1"/>
</dbReference>
<dbReference type="SMR" id="A8AMC8"/>
<dbReference type="STRING" id="290338.CKO_03562"/>
<dbReference type="GeneID" id="45137284"/>
<dbReference type="KEGG" id="cko:CKO_03562"/>
<dbReference type="HOGENOM" id="CLU_043846_1_2_6"/>
<dbReference type="OrthoDB" id="9774690at2"/>
<dbReference type="UniPathway" id="UPA00070">
    <property type="reaction ID" value="UER00116"/>
</dbReference>
<dbReference type="Proteomes" id="UP000008148">
    <property type="component" value="Chromosome"/>
</dbReference>
<dbReference type="GO" id="GO:0005829">
    <property type="term" value="C:cytosol"/>
    <property type="evidence" value="ECO:0007669"/>
    <property type="project" value="TreeGrafter"/>
</dbReference>
<dbReference type="GO" id="GO:0016597">
    <property type="term" value="F:amino acid binding"/>
    <property type="evidence" value="ECO:0007669"/>
    <property type="project" value="InterPro"/>
</dbReference>
<dbReference type="GO" id="GO:0004070">
    <property type="term" value="F:aspartate carbamoyltransferase activity"/>
    <property type="evidence" value="ECO:0007669"/>
    <property type="project" value="UniProtKB-UniRule"/>
</dbReference>
<dbReference type="GO" id="GO:0006207">
    <property type="term" value="P:'de novo' pyrimidine nucleobase biosynthetic process"/>
    <property type="evidence" value="ECO:0007669"/>
    <property type="project" value="InterPro"/>
</dbReference>
<dbReference type="GO" id="GO:0044205">
    <property type="term" value="P:'de novo' UMP biosynthetic process"/>
    <property type="evidence" value="ECO:0007669"/>
    <property type="project" value="UniProtKB-UniRule"/>
</dbReference>
<dbReference type="GO" id="GO:0006520">
    <property type="term" value="P:amino acid metabolic process"/>
    <property type="evidence" value="ECO:0007669"/>
    <property type="project" value="InterPro"/>
</dbReference>
<dbReference type="FunFam" id="3.40.50.1370:FF:000001">
    <property type="entry name" value="Aspartate carbamoyltransferase"/>
    <property type="match status" value="1"/>
</dbReference>
<dbReference type="FunFam" id="3.40.50.1370:FF:000002">
    <property type="entry name" value="Aspartate carbamoyltransferase 2"/>
    <property type="match status" value="1"/>
</dbReference>
<dbReference type="Gene3D" id="3.40.50.1370">
    <property type="entry name" value="Aspartate/ornithine carbamoyltransferase"/>
    <property type="match status" value="2"/>
</dbReference>
<dbReference type="HAMAP" id="MF_00001">
    <property type="entry name" value="Asp_carb_tr"/>
    <property type="match status" value="1"/>
</dbReference>
<dbReference type="InterPro" id="IPR006132">
    <property type="entry name" value="Asp/Orn_carbamoyltranf_P-bd"/>
</dbReference>
<dbReference type="InterPro" id="IPR006130">
    <property type="entry name" value="Asp/Orn_carbamoylTrfase"/>
</dbReference>
<dbReference type="InterPro" id="IPR036901">
    <property type="entry name" value="Asp/Orn_carbamoylTrfase_sf"/>
</dbReference>
<dbReference type="InterPro" id="IPR002082">
    <property type="entry name" value="Asp_carbamoyltransf"/>
</dbReference>
<dbReference type="InterPro" id="IPR006131">
    <property type="entry name" value="Asp_carbamoyltransf_Asp/Orn-bd"/>
</dbReference>
<dbReference type="NCBIfam" id="TIGR00670">
    <property type="entry name" value="asp_carb_tr"/>
    <property type="match status" value="1"/>
</dbReference>
<dbReference type="NCBIfam" id="NF002032">
    <property type="entry name" value="PRK00856.1"/>
    <property type="match status" value="1"/>
</dbReference>
<dbReference type="PANTHER" id="PTHR45753:SF6">
    <property type="entry name" value="ASPARTATE CARBAMOYLTRANSFERASE"/>
    <property type="match status" value="1"/>
</dbReference>
<dbReference type="PANTHER" id="PTHR45753">
    <property type="entry name" value="ORNITHINE CARBAMOYLTRANSFERASE, MITOCHONDRIAL"/>
    <property type="match status" value="1"/>
</dbReference>
<dbReference type="Pfam" id="PF00185">
    <property type="entry name" value="OTCace"/>
    <property type="match status" value="1"/>
</dbReference>
<dbReference type="Pfam" id="PF02729">
    <property type="entry name" value="OTCace_N"/>
    <property type="match status" value="1"/>
</dbReference>
<dbReference type="PRINTS" id="PR00100">
    <property type="entry name" value="AOTCASE"/>
</dbReference>
<dbReference type="PRINTS" id="PR00101">
    <property type="entry name" value="ATCASE"/>
</dbReference>
<dbReference type="SUPFAM" id="SSF53671">
    <property type="entry name" value="Aspartate/ornithine carbamoyltransferase"/>
    <property type="match status" value="1"/>
</dbReference>
<dbReference type="PROSITE" id="PS00097">
    <property type="entry name" value="CARBAMOYLTRANSFERASE"/>
    <property type="match status" value="1"/>
</dbReference>
<organism>
    <name type="scientific">Citrobacter koseri (strain ATCC BAA-895 / CDC 4225-83 / SGSC4696)</name>
    <dbReference type="NCBI Taxonomy" id="290338"/>
    <lineage>
        <taxon>Bacteria</taxon>
        <taxon>Pseudomonadati</taxon>
        <taxon>Pseudomonadota</taxon>
        <taxon>Gammaproteobacteria</taxon>
        <taxon>Enterobacterales</taxon>
        <taxon>Enterobacteriaceae</taxon>
        <taxon>Citrobacter</taxon>
    </lineage>
</organism>
<sequence length="311" mass="34339">MANPLYQKHIISINDLSRDDLNLVLATAAKLKANPQPELLKHKVIASCFFEASTRTRLSFETSMHRLGASVVGFSDSANTSLGKKGETLADTISVISTYVDAIVMRHPQEGAARLATEFSGNVPVLNAGDGANQHPTQTLLDLFTIQETQGRLDNLNIAMVGDLKYGRTVHSLTQALAKFDGNRFYFIAPDALAMPQYILDMLDEKGIAWSLHSAIEEVMAEVDILYMTRVQKERLDPSEYANVKAQFVLRASDLNGARENMKVLHPLPRIDEITTDVDKTPHAWYFQQAGNGIFARQALLALVLNSDLAL</sequence>
<proteinExistence type="inferred from homology"/>
<reference key="1">
    <citation type="submission" date="2007-08" db="EMBL/GenBank/DDBJ databases">
        <authorList>
            <consortium name="The Citrobacter koseri Genome Sequencing Project"/>
            <person name="McClelland M."/>
            <person name="Sanderson E.K."/>
            <person name="Porwollik S."/>
            <person name="Spieth J."/>
            <person name="Clifton W.S."/>
            <person name="Latreille P."/>
            <person name="Courtney L."/>
            <person name="Wang C."/>
            <person name="Pepin K."/>
            <person name="Bhonagiri V."/>
            <person name="Nash W."/>
            <person name="Johnson M."/>
            <person name="Thiruvilangam P."/>
            <person name="Wilson R."/>
        </authorList>
    </citation>
    <scope>NUCLEOTIDE SEQUENCE [LARGE SCALE GENOMIC DNA]</scope>
    <source>
        <strain>ATCC BAA-895 / CDC 4225-83 / SGSC4696</strain>
    </source>
</reference>
<accession>A8AMC8</accession>
<protein>
    <recommendedName>
        <fullName evidence="1">Aspartate carbamoyltransferase catalytic subunit</fullName>
        <ecNumber evidence="1">2.1.3.2</ecNumber>
    </recommendedName>
    <alternativeName>
        <fullName evidence="1">Aspartate transcarbamylase</fullName>
        <shortName evidence="1">ATCase</shortName>
    </alternativeName>
</protein>
<evidence type="ECO:0000255" key="1">
    <source>
        <dbReference type="HAMAP-Rule" id="MF_00001"/>
    </source>
</evidence>
<comment type="function">
    <text evidence="1">Catalyzes the condensation of carbamoyl phosphate and aspartate to form carbamoyl aspartate and inorganic phosphate, the committed step in the de novo pyrimidine nucleotide biosynthesis pathway.</text>
</comment>
<comment type="catalytic activity">
    <reaction evidence="1">
        <text>carbamoyl phosphate + L-aspartate = N-carbamoyl-L-aspartate + phosphate + H(+)</text>
        <dbReference type="Rhea" id="RHEA:20013"/>
        <dbReference type="ChEBI" id="CHEBI:15378"/>
        <dbReference type="ChEBI" id="CHEBI:29991"/>
        <dbReference type="ChEBI" id="CHEBI:32814"/>
        <dbReference type="ChEBI" id="CHEBI:43474"/>
        <dbReference type="ChEBI" id="CHEBI:58228"/>
        <dbReference type="EC" id="2.1.3.2"/>
    </reaction>
</comment>
<comment type="pathway">
    <text evidence="1">Pyrimidine metabolism; UMP biosynthesis via de novo pathway; (S)-dihydroorotate from bicarbonate: step 2/3.</text>
</comment>
<comment type="subunit">
    <text evidence="1">Heterododecamer (2C3:3R2) of six catalytic PyrB chains organized as two trimers (C3), and six regulatory PyrI chains organized as three dimers (R2).</text>
</comment>
<comment type="similarity">
    <text evidence="1">Belongs to the aspartate/ornithine carbamoyltransferase superfamily. ATCase family.</text>
</comment>
<keyword id="KW-0665">Pyrimidine biosynthesis</keyword>
<keyword id="KW-1185">Reference proteome</keyword>
<keyword id="KW-0808">Transferase</keyword>